<name>AAAT_RAT</name>
<comment type="function">
    <text evidence="4 7">Sodium-coupled antiporter of neutral amino acids. In a tri-substrate transport cycle, exchanges neutral amino acids between the extracellular and intracellular compartments, coupled to the inward cotransport of at least one sodium ion (By similarity) (PubMed:10698697). The preferred substrate is the essential amino acid L-glutamine, a precursor for biosynthesis of proteins, nucleotides and amine sugars as well as an alternative fuel for mitochondrial oxidative phosphorylation. Exchanges L-glutamine with other neutral amino acids such as L-serine, L-threonine and L-asparagine in a bidirectional way. Provides L-glutamine to proliferating stem and activated cells driving the metabolic switch toward cell differentiation (By similarity). The transport cycle is usually pH-independent, with the exception of L-glutamate. Transports extracellular L-glutamate coupled to the cotransport of one proton and one sodium ion in exchange for intracellular L-glutamine counter-ion. May provide for L-glutamate uptake in glial cells regulating glutamine/glutamate cycle in the nervous system (By similarity). Can transport D-amino acids. Mediates D-serine release from the retinal glia potentially affecting NMDA receptor function in retinal neurons (By similarity). Displays sodium- and amino acid-dependent but uncoupled channel-like anion conductance with a preference SCN(-) &gt;&gt; NO3(-) &gt; I(-) &gt; Cl(-) (PubMed:10698697). Through binding of the fusogenic protein syncytin-1/ERVW-1 may mediate trophoblasts syncytialization, the spontaneous fusion of their plasma membranes, an essential process in placental development (By similarity).</text>
</comment>
<comment type="catalytic activity">
    <reaction evidence="4">
        <text>L-glutamine(out) + L-serine(in) + Na(+)(out) = L-glutamine(in) + L-serine(out) + Na(+)(in)</text>
        <dbReference type="Rhea" id="RHEA:70855"/>
        <dbReference type="ChEBI" id="CHEBI:29101"/>
        <dbReference type="ChEBI" id="CHEBI:33384"/>
        <dbReference type="ChEBI" id="CHEBI:58359"/>
    </reaction>
</comment>
<comment type="catalytic activity">
    <reaction evidence="4">
        <text>L-glutamine(in) + L-serine(out) + Na(+)(out) = L-glutamine(out) + L-serine(in) + Na(+)(in)</text>
        <dbReference type="Rhea" id="RHEA:70887"/>
        <dbReference type="ChEBI" id="CHEBI:29101"/>
        <dbReference type="ChEBI" id="CHEBI:33384"/>
        <dbReference type="ChEBI" id="CHEBI:58359"/>
    </reaction>
</comment>
<comment type="catalytic activity">
    <reaction evidence="4">
        <text>L-threonine(in) + L-glutamine(out) + Na(+)(out) = L-threonine(out) + L-glutamine(in) + Na(+)(in)</text>
        <dbReference type="Rhea" id="RHEA:70863"/>
        <dbReference type="ChEBI" id="CHEBI:29101"/>
        <dbReference type="ChEBI" id="CHEBI:57926"/>
        <dbReference type="ChEBI" id="CHEBI:58359"/>
    </reaction>
</comment>
<comment type="catalytic activity">
    <reaction evidence="4">
        <text>L-threonine(out) + L-glutamine(in) + Na(+)(out) = L-threonine(in) + L-glutamine(out) + Na(+)(in)</text>
        <dbReference type="Rhea" id="RHEA:70879"/>
        <dbReference type="ChEBI" id="CHEBI:29101"/>
        <dbReference type="ChEBI" id="CHEBI:57926"/>
        <dbReference type="ChEBI" id="CHEBI:58359"/>
    </reaction>
</comment>
<comment type="catalytic activity">
    <reaction evidence="4">
        <text>L-asparagine(in) + L-glutamine(out) + Na(+)(out) = L-asparagine(out) + L-glutamine(in) + Na(+)(in)</text>
        <dbReference type="Rhea" id="RHEA:70859"/>
        <dbReference type="ChEBI" id="CHEBI:29101"/>
        <dbReference type="ChEBI" id="CHEBI:58048"/>
        <dbReference type="ChEBI" id="CHEBI:58359"/>
    </reaction>
</comment>
<comment type="catalytic activity">
    <reaction evidence="4">
        <text>L-asparagine(out) + L-glutamine(in) + Na(+)(out) = L-asparagine(in) + L-glutamine(out) + Na(+)(in)</text>
        <dbReference type="Rhea" id="RHEA:70891"/>
        <dbReference type="ChEBI" id="CHEBI:29101"/>
        <dbReference type="ChEBI" id="CHEBI:58048"/>
        <dbReference type="ChEBI" id="CHEBI:58359"/>
    </reaction>
</comment>
<comment type="catalytic activity">
    <reaction evidence="4">
        <text>L-glutamine(in) + L-alanine(out) + Na(+)(out) = L-glutamine(out) + L-alanine(in) + Na(+)(in)</text>
        <dbReference type="Rhea" id="RHEA:70867"/>
        <dbReference type="ChEBI" id="CHEBI:29101"/>
        <dbReference type="ChEBI" id="CHEBI:57972"/>
        <dbReference type="ChEBI" id="CHEBI:58359"/>
    </reaction>
</comment>
<comment type="catalytic activity">
    <reaction evidence="4">
        <text>L-valine(out) + L-glutamine(in) + Na(+)(out) = L-valine(in) + L-glutamine(out) + Na(+)(in)</text>
        <dbReference type="Rhea" id="RHEA:70871"/>
        <dbReference type="ChEBI" id="CHEBI:29101"/>
        <dbReference type="ChEBI" id="CHEBI:57762"/>
        <dbReference type="ChEBI" id="CHEBI:58359"/>
    </reaction>
</comment>
<comment type="catalytic activity">
    <reaction evidence="4">
        <text>L-glutamine(in) + L-methionine(out) + Na(+)(out) = L-glutamine(out) + L-methionine(in) + Na(+)(in)</text>
        <dbReference type="Rhea" id="RHEA:70875"/>
        <dbReference type="ChEBI" id="CHEBI:29101"/>
        <dbReference type="ChEBI" id="CHEBI:57844"/>
        <dbReference type="ChEBI" id="CHEBI:58359"/>
    </reaction>
</comment>
<comment type="catalytic activity">
    <reaction evidence="4">
        <text>L-glutamine(in) + L-glutamate(out) + Na(+)(out) + H(+)(out) = L-glutamine(out) + L-glutamate(in) + Na(+)(in) + H(+)(in)</text>
        <dbReference type="Rhea" id="RHEA:70883"/>
        <dbReference type="ChEBI" id="CHEBI:15378"/>
        <dbReference type="ChEBI" id="CHEBI:29101"/>
        <dbReference type="ChEBI" id="CHEBI:29985"/>
        <dbReference type="ChEBI" id="CHEBI:58359"/>
    </reaction>
</comment>
<comment type="catalytic activity">
    <reaction evidence="4">
        <text>D-serine(in) + L-glutamine(out) + Na(+)(out) = D-serine(out) + L-glutamine(in) + Na(+)(in)</text>
        <dbReference type="Rhea" id="RHEA:75307"/>
        <dbReference type="ChEBI" id="CHEBI:29101"/>
        <dbReference type="ChEBI" id="CHEBI:35247"/>
        <dbReference type="ChEBI" id="CHEBI:58359"/>
    </reaction>
</comment>
<comment type="catalytic activity">
    <reaction evidence="4">
        <text>D-serine(in) + L-alanine(out) + Na(+)(out) = D-serine(out) + L-alanine(in) + Na(+)(in)</text>
        <dbReference type="Rhea" id="RHEA:75311"/>
        <dbReference type="ChEBI" id="CHEBI:29101"/>
        <dbReference type="ChEBI" id="CHEBI:35247"/>
        <dbReference type="ChEBI" id="CHEBI:57972"/>
    </reaction>
</comment>
<comment type="catalytic activity">
    <reaction evidence="7">
        <text>nitrate(in) = nitrate(out)</text>
        <dbReference type="Rhea" id="RHEA:34923"/>
        <dbReference type="ChEBI" id="CHEBI:17632"/>
    </reaction>
</comment>
<comment type="catalytic activity">
    <reaction evidence="7">
        <text>iodide(out) = iodide(in)</text>
        <dbReference type="Rhea" id="RHEA:66324"/>
        <dbReference type="ChEBI" id="CHEBI:16382"/>
    </reaction>
</comment>
<comment type="catalytic activity">
    <reaction evidence="7">
        <text>thiocyanate(in) = thiocyanate(out)</text>
        <dbReference type="Rhea" id="RHEA:75347"/>
        <dbReference type="ChEBI" id="CHEBI:18022"/>
    </reaction>
</comment>
<comment type="activity regulation">
    <text evidence="7">Down-regulated at acidic pH.</text>
</comment>
<comment type="biophysicochemical properties">
    <kinetics>
        <KM evidence="7">2 mM for Na(+)</KM>
        <KM evidence="7">40 uM for thiocyanate (at -60 mV)</KM>
        <KM evidence="7">90 uM for thiocyanate (at -20 mV)</KM>
    </kinetics>
</comment>
<comment type="subunit">
    <text evidence="4">Homotrimer.</text>
</comment>
<comment type="subcellular location">
    <subcellularLocation>
        <location evidence="4">Cell membrane</location>
        <topology evidence="5">Multi-pass membrane protein</topology>
    </subcellularLocation>
    <subcellularLocation>
        <location evidence="4">Melanosome</location>
    </subcellularLocation>
</comment>
<comment type="similarity">
    <text evidence="8">Belongs to the dicarboxylate/amino acid:cation symporter (DAACS) (TC 2.A.23) family.</text>
</comment>
<protein>
    <recommendedName>
        <fullName>Neutral amino acid transporter B(0)</fullName>
        <shortName>ATB(0)</shortName>
    </recommendedName>
    <alternativeName>
        <fullName>ASC-like Na(+)-dependent neutral amino acid transporter ASCT2</fullName>
    </alternativeName>
    <alternativeName>
        <fullName evidence="3">Insulin-activated amino acid transporter</fullName>
    </alternativeName>
    <alternativeName>
        <fullName>Sodium-dependent neutral amino acid transporter type 2</fullName>
    </alternativeName>
</protein>
<feature type="chain" id="PRO_0000457948" description="Neutral amino acid transporter B(0)">
    <location>
        <begin position="1"/>
        <end position="555"/>
    </location>
</feature>
<feature type="topological domain" description="Cytoplasmic" evidence="8">
    <location>
        <begin position="1"/>
        <end position="52"/>
    </location>
</feature>
<feature type="transmembrane region" description="Helical; Name=1" evidence="2">
    <location>
        <begin position="53"/>
        <end position="82"/>
    </location>
</feature>
<feature type="topological domain" description="Extracellular" evidence="8">
    <location>
        <begin position="83"/>
        <end position="95"/>
    </location>
</feature>
<feature type="transmembrane region" description="Helical; Name=2" evidence="2">
    <location>
        <begin position="96"/>
        <end position="117"/>
    </location>
</feature>
<feature type="topological domain" description="Cytoplasmic" evidence="8">
    <location>
        <begin position="118"/>
        <end position="131"/>
    </location>
</feature>
<feature type="transmembrane region" description="Helical; Name=3" evidence="2">
    <location>
        <begin position="132"/>
        <end position="154"/>
    </location>
</feature>
<feature type="topological domain" description="Extracellular" evidence="8">
    <location>
        <begin position="155"/>
        <end position="239"/>
    </location>
</feature>
<feature type="transmembrane region" description="Helical; Name=4" evidence="2">
    <location>
        <begin position="240"/>
        <end position="262"/>
    </location>
</feature>
<feature type="topological domain" description="Cytoplasmic" evidence="8">
    <location>
        <begin position="263"/>
        <end position="271"/>
    </location>
</feature>
<feature type="transmembrane region" description="Helical; Name=5" evidence="2">
    <location>
        <begin position="272"/>
        <end position="299"/>
    </location>
</feature>
<feature type="topological domain" description="Extracellular" evidence="8">
    <location>
        <begin position="300"/>
        <end position="320"/>
    </location>
</feature>
<feature type="transmembrane region" description="Helical; Name=6" evidence="2">
    <location>
        <begin position="321"/>
        <end position="342"/>
    </location>
</feature>
<feature type="topological domain" description="Cytoplasmic" evidence="8">
    <location>
        <begin position="343"/>
        <end position="347"/>
    </location>
</feature>
<feature type="intramembrane region" description="Discontinuously helical" evidence="2">
    <location>
        <begin position="348"/>
        <end position="378"/>
    </location>
</feature>
<feature type="topological domain" description="Cytoplasmic" evidence="8">
    <location>
        <begin position="379"/>
        <end position="387"/>
    </location>
</feature>
<feature type="transmembrane region" description="Helical; Name=7" evidence="2">
    <location>
        <begin position="388"/>
        <end position="414"/>
    </location>
</feature>
<feature type="topological domain" description="Extracellular" evidence="8">
    <location>
        <begin position="415"/>
        <end position="427"/>
    </location>
</feature>
<feature type="intramembrane region" description="Discontinuously helical" evidence="2">
    <location>
        <begin position="428"/>
        <end position="461"/>
    </location>
</feature>
<feature type="topological domain" description="Extracellular" evidence="8">
    <location>
        <begin position="462"/>
        <end position="474"/>
    </location>
</feature>
<feature type="transmembrane region" description="Helical; Name=8" evidence="2">
    <location>
        <begin position="475"/>
        <end position="496"/>
    </location>
</feature>
<feature type="topological domain" description="Cytoplasmic" evidence="8">
    <location>
        <begin position="497"/>
        <end position="555"/>
    </location>
</feature>
<feature type="region of interest" description="Disordered" evidence="6">
    <location>
        <begin position="534"/>
        <end position="555"/>
    </location>
</feature>
<feature type="binding site" evidence="1">
    <location>
        <position position="396"/>
    </location>
    <ligand>
        <name>Na(+)</name>
        <dbReference type="ChEBI" id="CHEBI:29101"/>
        <label>1</label>
    </ligand>
</feature>
<feature type="binding site" evidence="2">
    <location>
        <position position="398"/>
    </location>
    <ligand>
        <name>Na(+)</name>
        <dbReference type="ChEBI" id="CHEBI:29101"/>
        <label>2</label>
    </ligand>
</feature>
<feature type="binding site" evidence="1">
    <location>
        <position position="400"/>
    </location>
    <ligand>
        <name>Na(+)</name>
        <dbReference type="ChEBI" id="CHEBI:29101"/>
        <label>1</label>
    </ligand>
</feature>
<feature type="binding site" evidence="1">
    <location>
        <position position="485"/>
    </location>
    <ligand>
        <name>Na(+)</name>
        <dbReference type="ChEBI" id="CHEBI:29101"/>
        <label>1</label>
    </ligand>
</feature>
<feature type="binding site" evidence="1">
    <location>
        <position position="489"/>
    </location>
    <ligand>
        <name>Na(+)</name>
        <dbReference type="ChEBI" id="CHEBI:29101"/>
        <label>1</label>
    </ligand>
</feature>
<feature type="modified residue" description="N-acetylmethionine" evidence="4">
    <location>
        <position position="1"/>
    </location>
</feature>
<feature type="modified residue" description="Phosphoserine" evidence="4">
    <location>
        <position position="507"/>
    </location>
</feature>
<feature type="modified residue" description="Phosphoserine" evidence="3">
    <location>
        <position position="508"/>
    </location>
</feature>
<feature type="modified residue" description="Phosphoserine" evidence="3">
    <location>
        <position position="520"/>
    </location>
</feature>
<feature type="modified residue" description="Phosphoserine" evidence="3">
    <location>
        <position position="545"/>
    </location>
</feature>
<feature type="modified residue" description="Phosphoserine" evidence="4">
    <location>
        <position position="553"/>
    </location>
</feature>
<feature type="glycosylation site" description="N-linked (GlcNAc...) asparagine" evidence="5">
    <location>
        <position position="164"/>
    </location>
</feature>
<feature type="glycosylation site" description="N-linked (GlcNAc...) asparagine" evidence="5">
    <location>
        <position position="231"/>
    </location>
</feature>
<accession>D3ZJ25</accession>
<reference key="1">
    <citation type="journal article" date="2004" name="Nature">
        <title>Genome sequence of the Brown Norway rat yields insights into mammalian evolution.</title>
        <authorList>
            <person name="Gibbs R.A."/>
            <person name="Weinstock G.M."/>
            <person name="Metzker M.L."/>
            <person name="Muzny D.M."/>
            <person name="Sodergren E.J."/>
            <person name="Scherer S."/>
            <person name="Scott G."/>
            <person name="Steffen D."/>
            <person name="Worley K.C."/>
            <person name="Burch P.E."/>
            <person name="Okwuonu G."/>
            <person name="Hines S."/>
            <person name="Lewis L."/>
            <person name="Deramo C."/>
            <person name="Delgado O."/>
            <person name="Dugan-Rocha S."/>
            <person name="Miner G."/>
            <person name="Morgan M."/>
            <person name="Hawes A."/>
            <person name="Gill R."/>
            <person name="Holt R.A."/>
            <person name="Adams M.D."/>
            <person name="Amanatides P.G."/>
            <person name="Baden-Tillson H."/>
            <person name="Barnstead M."/>
            <person name="Chin S."/>
            <person name="Evans C.A."/>
            <person name="Ferriera S."/>
            <person name="Fosler C."/>
            <person name="Glodek A."/>
            <person name="Gu Z."/>
            <person name="Jennings D."/>
            <person name="Kraft C.L."/>
            <person name="Nguyen T."/>
            <person name="Pfannkoch C.M."/>
            <person name="Sitter C."/>
            <person name="Sutton G.G."/>
            <person name="Venter J.C."/>
            <person name="Woodage T."/>
            <person name="Smith D."/>
            <person name="Lee H.-M."/>
            <person name="Gustafson E."/>
            <person name="Cahill P."/>
            <person name="Kana A."/>
            <person name="Doucette-Stamm L."/>
            <person name="Weinstock K."/>
            <person name="Fechtel K."/>
            <person name="Weiss R.B."/>
            <person name="Dunn D.M."/>
            <person name="Green E.D."/>
            <person name="Blakesley R.W."/>
            <person name="Bouffard G.G."/>
            <person name="De Jong P.J."/>
            <person name="Osoegawa K."/>
            <person name="Zhu B."/>
            <person name="Marra M."/>
            <person name="Schein J."/>
            <person name="Bosdet I."/>
            <person name="Fjell C."/>
            <person name="Jones S."/>
            <person name="Krzywinski M."/>
            <person name="Mathewson C."/>
            <person name="Siddiqui A."/>
            <person name="Wye N."/>
            <person name="McPherson J."/>
            <person name="Zhao S."/>
            <person name="Fraser C.M."/>
            <person name="Shetty J."/>
            <person name="Shatsman S."/>
            <person name="Geer K."/>
            <person name="Chen Y."/>
            <person name="Abramzon S."/>
            <person name="Nierman W.C."/>
            <person name="Havlak P.H."/>
            <person name="Chen R."/>
            <person name="Durbin K.J."/>
            <person name="Egan A."/>
            <person name="Ren Y."/>
            <person name="Song X.-Z."/>
            <person name="Li B."/>
            <person name="Liu Y."/>
            <person name="Qin X."/>
            <person name="Cawley S."/>
            <person name="Cooney A.J."/>
            <person name="D'Souza L.M."/>
            <person name="Martin K."/>
            <person name="Wu J.Q."/>
            <person name="Gonzalez-Garay M.L."/>
            <person name="Jackson A.R."/>
            <person name="Kalafus K.J."/>
            <person name="McLeod M.P."/>
            <person name="Milosavljevic A."/>
            <person name="Virk D."/>
            <person name="Volkov A."/>
            <person name="Wheeler D.A."/>
            <person name="Zhang Z."/>
            <person name="Bailey J.A."/>
            <person name="Eichler E.E."/>
            <person name="Tuzun E."/>
            <person name="Birney E."/>
            <person name="Mongin E."/>
            <person name="Ureta-Vidal A."/>
            <person name="Woodwark C."/>
            <person name="Zdobnov E."/>
            <person name="Bork P."/>
            <person name="Suyama M."/>
            <person name="Torrents D."/>
            <person name="Alexandersson M."/>
            <person name="Trask B.J."/>
            <person name="Young J.M."/>
            <person name="Huang H."/>
            <person name="Wang H."/>
            <person name="Xing H."/>
            <person name="Daniels S."/>
            <person name="Gietzen D."/>
            <person name="Schmidt J."/>
            <person name="Stevens K."/>
            <person name="Vitt U."/>
            <person name="Wingrove J."/>
            <person name="Camara F."/>
            <person name="Mar Alba M."/>
            <person name="Abril J.F."/>
            <person name="Guigo R."/>
            <person name="Smit A."/>
            <person name="Dubchak I."/>
            <person name="Rubin E.M."/>
            <person name="Couronne O."/>
            <person name="Poliakov A."/>
            <person name="Huebner N."/>
            <person name="Ganten D."/>
            <person name="Goesele C."/>
            <person name="Hummel O."/>
            <person name="Kreitler T."/>
            <person name="Lee Y.-A."/>
            <person name="Monti J."/>
            <person name="Schulz H."/>
            <person name="Zimdahl H."/>
            <person name="Himmelbauer H."/>
            <person name="Lehrach H."/>
            <person name="Jacob H.J."/>
            <person name="Bromberg S."/>
            <person name="Gullings-Handley J."/>
            <person name="Jensen-Seaman M.I."/>
            <person name="Kwitek A.E."/>
            <person name="Lazar J."/>
            <person name="Pasko D."/>
            <person name="Tonellato P.J."/>
            <person name="Twigger S."/>
            <person name="Ponting C.P."/>
            <person name="Duarte J.M."/>
            <person name="Rice S."/>
            <person name="Goodstadt L."/>
            <person name="Beatson S.A."/>
            <person name="Emes R.D."/>
            <person name="Winter E.E."/>
            <person name="Webber C."/>
            <person name="Brandt P."/>
            <person name="Nyakatura G."/>
            <person name="Adetobi M."/>
            <person name="Chiaromonte F."/>
            <person name="Elnitski L."/>
            <person name="Eswara P."/>
            <person name="Hardison R.C."/>
            <person name="Hou M."/>
            <person name="Kolbe D."/>
            <person name="Makova K."/>
            <person name="Miller W."/>
            <person name="Nekrutenko A."/>
            <person name="Riemer C."/>
            <person name="Schwartz S."/>
            <person name="Taylor J."/>
            <person name="Yang S."/>
            <person name="Zhang Y."/>
            <person name="Lindpaintner K."/>
            <person name="Andrews T.D."/>
            <person name="Caccamo M."/>
            <person name="Clamp M."/>
            <person name="Clarke L."/>
            <person name="Curwen V."/>
            <person name="Durbin R.M."/>
            <person name="Eyras E."/>
            <person name="Searle S.M."/>
            <person name="Cooper G.M."/>
            <person name="Batzoglou S."/>
            <person name="Brudno M."/>
            <person name="Sidow A."/>
            <person name="Stone E.A."/>
            <person name="Payseur B.A."/>
            <person name="Bourque G."/>
            <person name="Lopez-Otin C."/>
            <person name="Puente X.S."/>
            <person name="Chakrabarti K."/>
            <person name="Chatterji S."/>
            <person name="Dewey C."/>
            <person name="Pachter L."/>
            <person name="Bray N."/>
            <person name="Yap V.B."/>
            <person name="Caspi A."/>
            <person name="Tesler G."/>
            <person name="Pevzner P.A."/>
            <person name="Haussler D."/>
            <person name="Roskin K.M."/>
            <person name="Baertsch R."/>
            <person name="Clawson H."/>
            <person name="Furey T.S."/>
            <person name="Hinrichs A.S."/>
            <person name="Karolchik D."/>
            <person name="Kent W.J."/>
            <person name="Rosenbloom K.R."/>
            <person name="Trumbower H."/>
            <person name="Weirauch M."/>
            <person name="Cooper D.N."/>
            <person name="Stenson P.D."/>
            <person name="Ma B."/>
            <person name="Brent M."/>
            <person name="Arumugam M."/>
            <person name="Shteynberg D."/>
            <person name="Copley R.R."/>
            <person name="Taylor M.S."/>
            <person name="Riethman H."/>
            <person name="Mudunuri U."/>
            <person name="Peterson J."/>
            <person name="Guyer M."/>
            <person name="Felsenfeld A."/>
            <person name="Old S."/>
            <person name="Mockrin S."/>
            <person name="Collins F.S."/>
        </authorList>
    </citation>
    <scope>NUCLEOTIDE SEQUENCE [LARGE SCALE GENOMIC DNA]</scope>
    <source>
        <strain>Brown Norway</strain>
    </source>
</reference>
<reference key="2">
    <citation type="submission" date="2005-09" db="EMBL/GenBank/DDBJ databases">
        <authorList>
            <person name="Mural R.J."/>
            <person name="Li P.W."/>
            <person name="Adams M.D."/>
            <person name="Amanatides P.G."/>
            <person name="Baden-Tillson H."/>
            <person name="Barnstead M."/>
            <person name="Chin S.H."/>
            <person name="Dew I."/>
            <person name="Evans C.A."/>
            <person name="Ferriera S."/>
            <person name="Flanigan M."/>
            <person name="Fosler C."/>
            <person name="Glodek A."/>
            <person name="Gu Z."/>
            <person name="Holt R.A."/>
            <person name="Jennings D."/>
            <person name="Kraft C.L."/>
            <person name="Lu F."/>
            <person name="Nguyen T."/>
            <person name="Nusskern D.R."/>
            <person name="Pfannkoch C.M."/>
            <person name="Sitter C."/>
            <person name="Sutton G.G."/>
            <person name="Venter J.C."/>
            <person name="Wang Z."/>
            <person name="Woodage T."/>
            <person name="Zheng X.H."/>
            <person name="Zhong F."/>
        </authorList>
    </citation>
    <scope>NUCLEOTIDE SEQUENCE [GENOMIC DNA]</scope>
    <source>
        <strain>Brown Norway</strain>
    </source>
</reference>
<reference key="3">
    <citation type="journal article" date="2000" name="Biochem. J.">
        <title>Neutral amino acid transporter ASCT2 displays substrate-induced Na+ exchange and a substrate-gated anion conductance.</title>
        <authorList>
            <person name="Broeer A."/>
            <person name="Wagner C."/>
            <person name="Lang F."/>
            <person name="Broeer S."/>
        </authorList>
    </citation>
    <scope>FUNCTION</scope>
    <scope>TRANSPORTER ACTIVITY</scope>
    <scope>BIOPHYSICOCHEMICAL PROPERTIES</scope>
    <scope>ACTIVITY REGULATION</scope>
</reference>
<sequence>MAVDPPKADPKGVVAVDPTANCGSGLKSREDQGAKAGGCCSSRDQVCRCLRANLLVLLTVAAAVAGVVLGLGVSAAGGAEALGHARFTAFAFPGELLLRLLEMIILPLVVCSLIGGAASLDPSALGRLGAWALLFFLVTTLLSSALGVALALALKPGAAFAAINSSVVDSSVHRAPTKEVLDSFLELLRNMFPSNLVSASAAFRIFATSYVSKDINTSGIHPCGACPQRSNATMDQPHCEMKMNILGLVVFAIVFGVALRKLGPEGELLIRFFNSFNDATMVLVSWIMWYAPIGILFLVAGKIVEMKDIRQLFIGLGKYIVCCLLGHAIHGLLVLPLIYFLFTRKNPYRFLWGIVTPLATAFGTSSSSATLPLMMKCVEEKNGVAKHISRFILPIGATVNMDGAALFQCVAAVFIAQLNGMSLDFVKIITILVTATASSVGAAGIPAGGVLTLAIILEAISLPVKDISLILAVDWLVDRSCTVLNVEGDAFGAGLLQSYVDRTKMPSSEPELIQVKNDVSLKPLPLATEEGNPLLKQCREPSGDSSATCEKESVM</sequence>
<dbReference type="EMBL" id="CH473979">
    <property type="protein sequence ID" value="EDM08307.1"/>
    <property type="molecule type" value="Genomic_DNA"/>
</dbReference>
<dbReference type="SMR" id="D3ZJ25"/>
<dbReference type="FunCoup" id="D3ZJ25">
    <property type="interactions" value="87"/>
</dbReference>
<dbReference type="STRING" id="10116.ENSRNOP00000060053"/>
<dbReference type="GlyGen" id="D3ZJ25">
    <property type="glycosylation" value="2 sites"/>
</dbReference>
<dbReference type="PhosphoSitePlus" id="D3ZJ25"/>
<dbReference type="jPOST" id="D3ZJ25"/>
<dbReference type="PaxDb" id="10116-ENSRNOP00000060053"/>
<dbReference type="PeptideAtlas" id="D3ZJ25"/>
<dbReference type="Ensembl" id="ENSRNOT00000064332.4">
    <property type="protein sequence ID" value="ENSRNOP00000060053.4"/>
    <property type="gene ID" value="ENSRNOG00000015948.9"/>
</dbReference>
<dbReference type="AGR" id="RGD:708512"/>
<dbReference type="RGD" id="708512">
    <property type="gene designation" value="Slc1a5"/>
</dbReference>
<dbReference type="VEuPathDB" id="HostDB:ENSRNOG00000015948"/>
<dbReference type="GeneTree" id="ENSGT00940000159485"/>
<dbReference type="InParanoid" id="D3ZJ25"/>
<dbReference type="OMA" id="VGTFYAT"/>
<dbReference type="Reactome" id="R-RNO-352230">
    <property type="pathway name" value="Amino acid transport across the plasma membrane"/>
</dbReference>
<dbReference type="Reactome" id="R-RNO-9013149">
    <property type="pathway name" value="RAC1 GTPase cycle"/>
</dbReference>
<dbReference type="Reactome" id="R-RNO-9013406">
    <property type="pathway name" value="RHOQ GTPase cycle"/>
</dbReference>
<dbReference type="Reactome" id="R-RNO-9013407">
    <property type="pathway name" value="RHOH GTPase cycle"/>
</dbReference>
<dbReference type="PRO" id="PR:D3ZJ25"/>
<dbReference type="Proteomes" id="UP000002494">
    <property type="component" value="Chromosome 1"/>
</dbReference>
<dbReference type="Proteomes" id="UP000234681">
    <property type="component" value="Chromosome 1"/>
</dbReference>
<dbReference type="Bgee" id="ENSRNOG00000015948">
    <property type="expression patterns" value="Expressed in thymus and 20 other cell types or tissues"/>
</dbReference>
<dbReference type="ExpressionAtlas" id="D3ZJ25">
    <property type="expression patterns" value="baseline and differential"/>
</dbReference>
<dbReference type="GO" id="GO:0009925">
    <property type="term" value="C:basal plasma membrane"/>
    <property type="evidence" value="ECO:0000266"/>
    <property type="project" value="RGD"/>
</dbReference>
<dbReference type="GO" id="GO:0034451">
    <property type="term" value="C:centriolar satellite"/>
    <property type="evidence" value="ECO:0007669"/>
    <property type="project" value="Ensembl"/>
</dbReference>
<dbReference type="GO" id="GO:0036064">
    <property type="term" value="C:ciliary basal body"/>
    <property type="evidence" value="ECO:0007669"/>
    <property type="project" value="Ensembl"/>
</dbReference>
<dbReference type="GO" id="GO:0042470">
    <property type="term" value="C:melanosome"/>
    <property type="evidence" value="ECO:0007669"/>
    <property type="project" value="UniProtKB-SubCell"/>
</dbReference>
<dbReference type="GO" id="GO:0016020">
    <property type="term" value="C:membrane"/>
    <property type="evidence" value="ECO:0000266"/>
    <property type="project" value="RGD"/>
</dbReference>
<dbReference type="GO" id="GO:0005886">
    <property type="term" value="C:plasma membrane"/>
    <property type="evidence" value="ECO:0000266"/>
    <property type="project" value="RGD"/>
</dbReference>
<dbReference type="GO" id="GO:0015297">
    <property type="term" value="F:antiporter activity"/>
    <property type="evidence" value="ECO:0000314"/>
    <property type="project" value="UniProtKB"/>
</dbReference>
<dbReference type="GO" id="GO:0015183">
    <property type="term" value="F:L-aspartate transmembrane transporter activity"/>
    <property type="evidence" value="ECO:0000314"/>
    <property type="project" value="ARUK-UCL"/>
</dbReference>
<dbReference type="GO" id="GO:0015186">
    <property type="term" value="F:L-glutamine transmembrane transporter activity"/>
    <property type="evidence" value="ECO:0000266"/>
    <property type="project" value="RGD"/>
</dbReference>
<dbReference type="GO" id="GO:0015194">
    <property type="term" value="F:L-serine transmembrane transporter activity"/>
    <property type="evidence" value="ECO:0000314"/>
    <property type="project" value="RGD"/>
</dbReference>
<dbReference type="GO" id="GO:0022834">
    <property type="term" value="F:ligand-gated channel activity"/>
    <property type="evidence" value="ECO:0000314"/>
    <property type="project" value="UniProtKB"/>
</dbReference>
<dbReference type="GO" id="GO:0046872">
    <property type="term" value="F:metal ion binding"/>
    <property type="evidence" value="ECO:0007669"/>
    <property type="project" value="UniProtKB-KW"/>
</dbReference>
<dbReference type="GO" id="GO:0015175">
    <property type="term" value="F:neutral L-amino acid transmembrane transporter activity"/>
    <property type="evidence" value="ECO:0000266"/>
    <property type="project" value="RGD"/>
</dbReference>
<dbReference type="GO" id="GO:0015293">
    <property type="term" value="F:symporter activity"/>
    <property type="evidence" value="ECO:0007669"/>
    <property type="project" value="UniProtKB-KW"/>
</dbReference>
<dbReference type="GO" id="GO:0030218">
    <property type="term" value="P:erythrocyte differentiation"/>
    <property type="evidence" value="ECO:0000266"/>
    <property type="project" value="RGD"/>
</dbReference>
<dbReference type="GO" id="GO:0010585">
    <property type="term" value="P:glutamine secretion"/>
    <property type="evidence" value="ECO:0000314"/>
    <property type="project" value="RGD"/>
</dbReference>
<dbReference type="GO" id="GO:0006868">
    <property type="term" value="P:glutamine transport"/>
    <property type="evidence" value="ECO:0000266"/>
    <property type="project" value="RGD"/>
</dbReference>
<dbReference type="GO" id="GO:0140009">
    <property type="term" value="P:L-aspartate import across plasma membrane"/>
    <property type="evidence" value="ECO:0000314"/>
    <property type="project" value="ARUK-UCL"/>
</dbReference>
<dbReference type="GO" id="GO:1903803">
    <property type="term" value="P:L-glutamine import across plasma membrane"/>
    <property type="evidence" value="ECO:0000314"/>
    <property type="project" value="RGD"/>
</dbReference>
<dbReference type="GO" id="GO:0015825">
    <property type="term" value="P:L-serine transport"/>
    <property type="evidence" value="ECO:0000314"/>
    <property type="project" value="RGD"/>
</dbReference>
<dbReference type="GO" id="GO:0015804">
    <property type="term" value="P:neutral amino acid transport"/>
    <property type="evidence" value="ECO:0000314"/>
    <property type="project" value="UniProtKB"/>
</dbReference>
<dbReference type="GO" id="GO:0070207">
    <property type="term" value="P:protein homotrimerization"/>
    <property type="evidence" value="ECO:0000266"/>
    <property type="project" value="RGD"/>
</dbReference>
<dbReference type="GO" id="GO:0150104">
    <property type="term" value="P:transport across blood-brain barrier"/>
    <property type="evidence" value="ECO:0000266"/>
    <property type="project" value="RGD"/>
</dbReference>
<dbReference type="Gene3D" id="1.10.3860.10">
    <property type="entry name" value="Sodium:dicarboxylate symporter"/>
    <property type="match status" value="1"/>
</dbReference>
<dbReference type="InterPro" id="IPR050746">
    <property type="entry name" value="DAACS"/>
</dbReference>
<dbReference type="InterPro" id="IPR001991">
    <property type="entry name" value="Na-dicarboxylate_symporter"/>
</dbReference>
<dbReference type="InterPro" id="IPR018107">
    <property type="entry name" value="Na-dicarboxylate_symporter_CS"/>
</dbReference>
<dbReference type="InterPro" id="IPR036458">
    <property type="entry name" value="Na:dicarbo_symporter_sf"/>
</dbReference>
<dbReference type="PANTHER" id="PTHR11958:SF19">
    <property type="entry name" value="NEUTRAL AMINO ACID TRANSPORTER B(0)"/>
    <property type="match status" value="1"/>
</dbReference>
<dbReference type="PANTHER" id="PTHR11958">
    <property type="entry name" value="SODIUM/DICARBOXYLATE SYMPORTER-RELATED"/>
    <property type="match status" value="1"/>
</dbReference>
<dbReference type="Pfam" id="PF00375">
    <property type="entry name" value="SDF"/>
    <property type="match status" value="1"/>
</dbReference>
<dbReference type="PRINTS" id="PR00173">
    <property type="entry name" value="EDTRNSPORT"/>
</dbReference>
<dbReference type="SUPFAM" id="SSF118215">
    <property type="entry name" value="Proton glutamate symport protein"/>
    <property type="match status" value="1"/>
</dbReference>
<dbReference type="PROSITE" id="PS00713">
    <property type="entry name" value="NA_DICARBOXYL_SYMP_1"/>
    <property type="match status" value="1"/>
</dbReference>
<dbReference type="PROSITE" id="PS00714">
    <property type="entry name" value="NA_DICARBOXYL_SYMP_2"/>
    <property type="match status" value="1"/>
</dbReference>
<gene>
    <name type="primary">Slc1a5</name>
</gene>
<evidence type="ECO:0000250" key="1">
    <source>
        <dbReference type="UniProtKB" id="O59010"/>
    </source>
</evidence>
<evidence type="ECO:0000250" key="2">
    <source>
        <dbReference type="UniProtKB" id="P43003"/>
    </source>
</evidence>
<evidence type="ECO:0000250" key="3">
    <source>
        <dbReference type="UniProtKB" id="P51912"/>
    </source>
</evidence>
<evidence type="ECO:0000250" key="4">
    <source>
        <dbReference type="UniProtKB" id="Q15758"/>
    </source>
</evidence>
<evidence type="ECO:0000255" key="5"/>
<evidence type="ECO:0000256" key="6">
    <source>
        <dbReference type="SAM" id="MobiDB-lite"/>
    </source>
</evidence>
<evidence type="ECO:0000269" key="7">
    <source>
    </source>
</evidence>
<evidence type="ECO:0000305" key="8"/>
<keyword id="KW-0007">Acetylation</keyword>
<keyword id="KW-0029">Amino-acid transport</keyword>
<keyword id="KW-0050">Antiport</keyword>
<keyword id="KW-1003">Cell membrane</keyword>
<keyword id="KW-0325">Glycoprotein</keyword>
<keyword id="KW-0472">Membrane</keyword>
<keyword id="KW-0479">Metal-binding</keyword>
<keyword id="KW-0597">Phosphoprotein</keyword>
<keyword id="KW-1185">Reference proteome</keyword>
<keyword id="KW-0915">Sodium</keyword>
<keyword id="KW-0769">Symport</keyword>
<keyword id="KW-0812">Transmembrane</keyword>
<keyword id="KW-1133">Transmembrane helix</keyword>
<keyword id="KW-0813">Transport</keyword>
<proteinExistence type="evidence at protein level"/>
<organism>
    <name type="scientific">Rattus norvegicus</name>
    <name type="common">Rat</name>
    <dbReference type="NCBI Taxonomy" id="10116"/>
    <lineage>
        <taxon>Eukaryota</taxon>
        <taxon>Metazoa</taxon>
        <taxon>Chordata</taxon>
        <taxon>Craniata</taxon>
        <taxon>Vertebrata</taxon>
        <taxon>Euteleostomi</taxon>
        <taxon>Mammalia</taxon>
        <taxon>Eutheria</taxon>
        <taxon>Euarchontoglires</taxon>
        <taxon>Glires</taxon>
        <taxon>Rodentia</taxon>
        <taxon>Myomorpha</taxon>
        <taxon>Muroidea</taxon>
        <taxon>Muridae</taxon>
        <taxon>Murinae</taxon>
        <taxon>Rattus</taxon>
    </lineage>
</organism>